<protein>
    <recommendedName>
        <fullName evidence="1">Large ribosomal subunit protein uL10</fullName>
    </recommendedName>
    <alternativeName>
        <fullName evidence="2">50S ribosomal protein L10</fullName>
    </alternativeName>
</protein>
<organism>
    <name type="scientific">Afipia carboxidovorans (strain ATCC 49405 / DSM 1227 / KCTC 32145 / OM5)</name>
    <name type="common">Oligotropha carboxidovorans</name>
    <dbReference type="NCBI Taxonomy" id="504832"/>
    <lineage>
        <taxon>Bacteria</taxon>
        <taxon>Pseudomonadati</taxon>
        <taxon>Pseudomonadota</taxon>
        <taxon>Alphaproteobacteria</taxon>
        <taxon>Hyphomicrobiales</taxon>
        <taxon>Nitrobacteraceae</taxon>
        <taxon>Afipia</taxon>
    </lineage>
</organism>
<gene>
    <name evidence="1" type="primary">rplJ</name>
    <name type="ordered locus">OCAR_5661</name>
    <name type="ordered locus">OCA5_c23440</name>
</gene>
<proteinExistence type="inferred from homology"/>
<keyword id="KW-1185">Reference proteome</keyword>
<keyword id="KW-0687">Ribonucleoprotein</keyword>
<keyword id="KW-0689">Ribosomal protein</keyword>
<keyword id="KW-0694">RNA-binding</keyword>
<keyword id="KW-0699">rRNA-binding</keyword>
<name>RL10_AFIC5</name>
<feature type="chain" id="PRO_1000120991" description="Large ribosomal subunit protein uL10">
    <location>
        <begin position="1"/>
        <end position="172"/>
    </location>
</feature>
<accession>B6JER7</accession>
<accession>F8BZE1</accession>
<sequence>MERAAKKEAVDALKGTFQSTGVAIVAHYSGLTVAQMQTLRTQMKQAGASVKVSKNRLAKIALEGTDVASIGSLLKGPTVIATSNDPVAAPKIAVEFAKTNEQFVILGGAMGTTVLNPDAVKALASLPSLDELRAKIIGLLVAPATKIAQLTNAPAAKVARVVQAYASKGEAA</sequence>
<reference key="1">
    <citation type="journal article" date="2008" name="J. Bacteriol.">
        <title>Genome sequence of the chemolithoautotrophic bacterium Oligotropha carboxidovorans OM5T.</title>
        <authorList>
            <person name="Paul D."/>
            <person name="Bridges S."/>
            <person name="Burgess S.C."/>
            <person name="Dandass Y."/>
            <person name="Lawrence M.L."/>
        </authorList>
    </citation>
    <scope>NUCLEOTIDE SEQUENCE [LARGE SCALE GENOMIC DNA]</scope>
    <source>
        <strain>ATCC 49405 / DSM 1227 / KCTC 32145 / OM5</strain>
    </source>
</reference>
<reference key="2">
    <citation type="journal article" date="2011" name="J. Bacteriol.">
        <title>Complete genome sequences of the chemolithoautotrophic Oligotropha carboxidovorans strains OM4 and OM5.</title>
        <authorList>
            <person name="Volland S."/>
            <person name="Rachinger M."/>
            <person name="Strittmatter A."/>
            <person name="Daniel R."/>
            <person name="Gottschalk G."/>
            <person name="Meyer O."/>
        </authorList>
    </citation>
    <scope>NUCLEOTIDE SEQUENCE [LARGE SCALE GENOMIC DNA]</scope>
    <source>
        <strain>ATCC 49405 / DSM 1227 / KCTC 32145 / OM5</strain>
    </source>
</reference>
<evidence type="ECO:0000255" key="1">
    <source>
        <dbReference type="HAMAP-Rule" id="MF_00362"/>
    </source>
</evidence>
<evidence type="ECO:0000305" key="2"/>
<dbReference type="EMBL" id="CP001196">
    <property type="protein sequence ID" value="ACI92789.1"/>
    <property type="molecule type" value="Genomic_DNA"/>
</dbReference>
<dbReference type="EMBL" id="CP002826">
    <property type="protein sequence ID" value="AEI07044.1"/>
    <property type="molecule type" value="Genomic_DNA"/>
</dbReference>
<dbReference type="RefSeq" id="WP_012562818.1">
    <property type="nucleotide sequence ID" value="NC_015684.1"/>
</dbReference>
<dbReference type="SMR" id="B6JER7"/>
<dbReference type="STRING" id="504832.OCA5_c23440"/>
<dbReference type="KEGG" id="oca:OCAR_5661"/>
<dbReference type="KEGG" id="ocg:OCA5_c23440"/>
<dbReference type="PATRIC" id="fig|504832.7.peg.2471"/>
<dbReference type="eggNOG" id="COG0244">
    <property type="taxonomic scope" value="Bacteria"/>
</dbReference>
<dbReference type="HOGENOM" id="CLU_092227_0_0_5"/>
<dbReference type="OrthoDB" id="9791972at2"/>
<dbReference type="Proteomes" id="UP000007730">
    <property type="component" value="Chromosome"/>
</dbReference>
<dbReference type="GO" id="GO:0015934">
    <property type="term" value="C:large ribosomal subunit"/>
    <property type="evidence" value="ECO:0007669"/>
    <property type="project" value="InterPro"/>
</dbReference>
<dbReference type="GO" id="GO:0070180">
    <property type="term" value="F:large ribosomal subunit rRNA binding"/>
    <property type="evidence" value="ECO:0007669"/>
    <property type="project" value="UniProtKB-UniRule"/>
</dbReference>
<dbReference type="GO" id="GO:0003735">
    <property type="term" value="F:structural constituent of ribosome"/>
    <property type="evidence" value="ECO:0007669"/>
    <property type="project" value="InterPro"/>
</dbReference>
<dbReference type="GO" id="GO:0006412">
    <property type="term" value="P:translation"/>
    <property type="evidence" value="ECO:0007669"/>
    <property type="project" value="UniProtKB-UniRule"/>
</dbReference>
<dbReference type="CDD" id="cd05797">
    <property type="entry name" value="Ribosomal_L10"/>
    <property type="match status" value="1"/>
</dbReference>
<dbReference type="Gene3D" id="3.30.70.1730">
    <property type="match status" value="1"/>
</dbReference>
<dbReference type="Gene3D" id="6.10.250.290">
    <property type="match status" value="1"/>
</dbReference>
<dbReference type="HAMAP" id="MF_00362">
    <property type="entry name" value="Ribosomal_uL10"/>
    <property type="match status" value="1"/>
</dbReference>
<dbReference type="InterPro" id="IPR001790">
    <property type="entry name" value="Ribosomal_uL10"/>
</dbReference>
<dbReference type="InterPro" id="IPR043141">
    <property type="entry name" value="Ribosomal_uL10-like_sf"/>
</dbReference>
<dbReference type="InterPro" id="IPR022973">
    <property type="entry name" value="Ribosomal_uL10_bac"/>
</dbReference>
<dbReference type="InterPro" id="IPR047865">
    <property type="entry name" value="Ribosomal_uL10_bac_type"/>
</dbReference>
<dbReference type="InterPro" id="IPR002363">
    <property type="entry name" value="Ribosomal_uL10_CS_bac"/>
</dbReference>
<dbReference type="NCBIfam" id="NF000955">
    <property type="entry name" value="PRK00099.1-1"/>
    <property type="match status" value="1"/>
</dbReference>
<dbReference type="PANTHER" id="PTHR11560">
    <property type="entry name" value="39S RIBOSOMAL PROTEIN L10, MITOCHONDRIAL"/>
    <property type="match status" value="1"/>
</dbReference>
<dbReference type="Pfam" id="PF00466">
    <property type="entry name" value="Ribosomal_L10"/>
    <property type="match status" value="1"/>
</dbReference>
<dbReference type="SUPFAM" id="SSF160369">
    <property type="entry name" value="Ribosomal protein L10-like"/>
    <property type="match status" value="1"/>
</dbReference>
<dbReference type="PROSITE" id="PS01109">
    <property type="entry name" value="RIBOSOMAL_L10"/>
    <property type="match status" value="1"/>
</dbReference>
<comment type="function">
    <text evidence="1">Forms part of the ribosomal stalk, playing a central role in the interaction of the ribosome with GTP-bound translation factors.</text>
</comment>
<comment type="subunit">
    <text evidence="1">Part of the ribosomal stalk of the 50S ribosomal subunit. The N-terminus interacts with L11 and the large rRNA to form the base of the stalk. The C-terminus forms an elongated spine to which L12 dimers bind in a sequential fashion forming a multimeric L10(L12)X complex.</text>
</comment>
<comment type="similarity">
    <text evidence="1">Belongs to the universal ribosomal protein uL10 family.</text>
</comment>